<keyword id="KW-0963">Cytoplasm</keyword>
<keyword id="KW-0227">DNA damage</keyword>
<keyword id="KW-0233">DNA recombination</keyword>
<keyword id="KW-0234">DNA repair</keyword>
<keyword id="KW-0238">DNA-binding</keyword>
<keyword id="KW-0255">Endonuclease</keyword>
<keyword id="KW-0378">Hydrolase</keyword>
<keyword id="KW-0460">Magnesium</keyword>
<keyword id="KW-0479">Metal-binding</keyword>
<keyword id="KW-0540">Nuclease</keyword>
<name>RUVC_CHLTA</name>
<sequence>MADLIMGIDPGTLVCGYALIKVENRYHIHPHSFGKVKLSQKLALAHRYKQLFTEISTILQQESPKAVVLETQYVHKNPQSTIKLGMARGVLLLAASLQDVPVFEYAPNTAKKAAVGKGNASKKQVQLMVSKLLRVPDLLAEDNEDIADAFALAMCHAHLALYQDLKKTLV</sequence>
<reference key="1">
    <citation type="journal article" date="2005" name="Infect. Immun.">
        <title>Comparative genomic analysis of Chlamydia trachomatis oculotropic and genitotropic strains.</title>
        <authorList>
            <person name="Carlson J.H."/>
            <person name="Porcella S.F."/>
            <person name="McClarty G."/>
            <person name="Caldwell H.D."/>
        </authorList>
    </citation>
    <scope>NUCLEOTIDE SEQUENCE [LARGE SCALE GENOMIC DNA]</scope>
    <source>
        <strain>ATCC VR-571B / DSM 19440 / HAR-13</strain>
    </source>
</reference>
<dbReference type="EC" id="3.1.21.10" evidence="1"/>
<dbReference type="EMBL" id="CP000051">
    <property type="protein sequence ID" value="AAX50777.1"/>
    <property type="molecule type" value="Genomic_DNA"/>
</dbReference>
<dbReference type="RefSeq" id="WP_011324756.1">
    <property type="nucleotide sequence ID" value="NC_007429.1"/>
</dbReference>
<dbReference type="SMR" id="Q3KLJ5"/>
<dbReference type="KEGG" id="cta:CTA_0550"/>
<dbReference type="HOGENOM" id="CLU_091257_3_0_0"/>
<dbReference type="Proteomes" id="UP000002532">
    <property type="component" value="Chromosome"/>
</dbReference>
<dbReference type="GO" id="GO:0005737">
    <property type="term" value="C:cytoplasm"/>
    <property type="evidence" value="ECO:0007669"/>
    <property type="project" value="UniProtKB-SubCell"/>
</dbReference>
<dbReference type="GO" id="GO:0048476">
    <property type="term" value="C:Holliday junction resolvase complex"/>
    <property type="evidence" value="ECO:0007669"/>
    <property type="project" value="UniProtKB-UniRule"/>
</dbReference>
<dbReference type="GO" id="GO:0008821">
    <property type="term" value="F:crossover junction DNA endonuclease activity"/>
    <property type="evidence" value="ECO:0007669"/>
    <property type="project" value="UniProtKB-UniRule"/>
</dbReference>
<dbReference type="GO" id="GO:0003677">
    <property type="term" value="F:DNA binding"/>
    <property type="evidence" value="ECO:0007669"/>
    <property type="project" value="UniProtKB-KW"/>
</dbReference>
<dbReference type="GO" id="GO:0000287">
    <property type="term" value="F:magnesium ion binding"/>
    <property type="evidence" value="ECO:0007669"/>
    <property type="project" value="UniProtKB-UniRule"/>
</dbReference>
<dbReference type="GO" id="GO:0006310">
    <property type="term" value="P:DNA recombination"/>
    <property type="evidence" value="ECO:0007669"/>
    <property type="project" value="UniProtKB-UniRule"/>
</dbReference>
<dbReference type="GO" id="GO:0006281">
    <property type="term" value="P:DNA repair"/>
    <property type="evidence" value="ECO:0007669"/>
    <property type="project" value="UniProtKB-UniRule"/>
</dbReference>
<dbReference type="CDD" id="cd16962">
    <property type="entry name" value="RuvC"/>
    <property type="match status" value="1"/>
</dbReference>
<dbReference type="FunFam" id="3.30.420.10:FF:000002">
    <property type="entry name" value="Crossover junction endodeoxyribonuclease RuvC"/>
    <property type="match status" value="1"/>
</dbReference>
<dbReference type="Gene3D" id="3.30.420.10">
    <property type="entry name" value="Ribonuclease H-like superfamily/Ribonuclease H"/>
    <property type="match status" value="1"/>
</dbReference>
<dbReference type="HAMAP" id="MF_00034">
    <property type="entry name" value="RuvC"/>
    <property type="match status" value="1"/>
</dbReference>
<dbReference type="InterPro" id="IPR012337">
    <property type="entry name" value="RNaseH-like_sf"/>
</dbReference>
<dbReference type="InterPro" id="IPR036397">
    <property type="entry name" value="RNaseH_sf"/>
</dbReference>
<dbReference type="InterPro" id="IPR020563">
    <property type="entry name" value="X-over_junc_endoDNase_Mg_BS"/>
</dbReference>
<dbReference type="InterPro" id="IPR002176">
    <property type="entry name" value="X-over_junc_endoDNase_RuvC"/>
</dbReference>
<dbReference type="NCBIfam" id="TIGR00228">
    <property type="entry name" value="ruvC"/>
    <property type="match status" value="1"/>
</dbReference>
<dbReference type="PANTHER" id="PTHR30194">
    <property type="entry name" value="CROSSOVER JUNCTION ENDODEOXYRIBONUCLEASE RUVC"/>
    <property type="match status" value="1"/>
</dbReference>
<dbReference type="PANTHER" id="PTHR30194:SF3">
    <property type="entry name" value="CROSSOVER JUNCTION ENDODEOXYRIBONUCLEASE RUVC"/>
    <property type="match status" value="1"/>
</dbReference>
<dbReference type="Pfam" id="PF02075">
    <property type="entry name" value="RuvC"/>
    <property type="match status" value="1"/>
</dbReference>
<dbReference type="PRINTS" id="PR00696">
    <property type="entry name" value="RSOLVASERUVC"/>
</dbReference>
<dbReference type="SUPFAM" id="SSF53098">
    <property type="entry name" value="Ribonuclease H-like"/>
    <property type="match status" value="1"/>
</dbReference>
<dbReference type="PROSITE" id="PS01321">
    <property type="entry name" value="RUVC"/>
    <property type="match status" value="1"/>
</dbReference>
<comment type="function">
    <text evidence="1">The RuvA-RuvB-RuvC complex processes Holliday junction (HJ) DNA during genetic recombination and DNA repair. Endonuclease that resolves HJ intermediates. Cleaves cruciform DNA by making single-stranded nicks across the HJ at symmetrical positions within the homologous arms, yielding a 5'-phosphate and a 3'-hydroxyl group; requires a central core of homology in the junction. The consensus cleavage sequence is 5'-(A/T)TT(C/G)-3'. Cleavage occurs on the 3'-side of the TT dinucleotide at the point of strand exchange. HJ branch migration catalyzed by RuvA-RuvB allows RuvC to scan DNA until it finds its consensus sequence, where it cleaves and resolves the cruciform DNA.</text>
</comment>
<comment type="catalytic activity">
    <reaction evidence="1">
        <text>Endonucleolytic cleavage at a junction such as a reciprocal single-stranded crossover between two homologous DNA duplexes (Holliday junction).</text>
        <dbReference type="EC" id="3.1.21.10"/>
    </reaction>
</comment>
<comment type="cofactor">
    <cofactor evidence="1">
        <name>Mg(2+)</name>
        <dbReference type="ChEBI" id="CHEBI:18420"/>
    </cofactor>
    <text evidence="1">Binds 2 Mg(2+) ion per subunit.</text>
</comment>
<comment type="subunit">
    <text evidence="1">Homodimer which binds Holliday junction (HJ) DNA. The HJ becomes 2-fold symmetrical on binding to RuvC with unstacked arms; it has a different conformation from HJ DNA in complex with RuvA. In the full resolvosome a probable DNA-RuvA(4)-RuvB(12)-RuvC(2) complex forms which resolves the HJ.</text>
</comment>
<comment type="subcellular location">
    <subcellularLocation>
        <location evidence="1">Cytoplasm</location>
    </subcellularLocation>
</comment>
<comment type="similarity">
    <text evidence="1">Belongs to the RuvC family.</text>
</comment>
<gene>
    <name evidence="1" type="primary">ruvC</name>
    <name type="ordered locus">CTA_0550</name>
</gene>
<organism>
    <name type="scientific">Chlamydia trachomatis serovar A (strain ATCC VR-571B / DSM 19440 / HAR-13)</name>
    <dbReference type="NCBI Taxonomy" id="315277"/>
    <lineage>
        <taxon>Bacteria</taxon>
        <taxon>Pseudomonadati</taxon>
        <taxon>Chlamydiota</taxon>
        <taxon>Chlamydiia</taxon>
        <taxon>Chlamydiales</taxon>
        <taxon>Chlamydiaceae</taxon>
        <taxon>Chlamydia/Chlamydophila group</taxon>
        <taxon>Chlamydia</taxon>
    </lineage>
</organism>
<protein>
    <recommendedName>
        <fullName evidence="1">Crossover junction endodeoxyribonuclease RuvC</fullName>
        <ecNumber evidence="1">3.1.21.10</ecNumber>
    </recommendedName>
    <alternativeName>
        <fullName evidence="1">Holliday junction nuclease RuvC</fullName>
    </alternativeName>
    <alternativeName>
        <fullName evidence="1">Holliday junction resolvase RuvC</fullName>
    </alternativeName>
</protein>
<accession>Q3KLJ5</accession>
<proteinExistence type="inferred from homology"/>
<feature type="chain" id="PRO_0000225130" description="Crossover junction endodeoxyribonuclease RuvC">
    <location>
        <begin position="1"/>
        <end position="170"/>
    </location>
</feature>
<feature type="active site" evidence="1">
    <location>
        <position position="9"/>
    </location>
</feature>
<feature type="active site" evidence="1">
    <location>
        <position position="70"/>
    </location>
</feature>
<feature type="active site" evidence="1">
    <location>
        <position position="145"/>
    </location>
</feature>
<feature type="binding site" evidence="1">
    <location>
        <position position="9"/>
    </location>
    <ligand>
        <name>Mg(2+)</name>
        <dbReference type="ChEBI" id="CHEBI:18420"/>
        <label>1</label>
    </ligand>
</feature>
<feature type="binding site" evidence="1">
    <location>
        <position position="70"/>
    </location>
    <ligand>
        <name>Mg(2+)</name>
        <dbReference type="ChEBI" id="CHEBI:18420"/>
        <label>2</label>
    </ligand>
</feature>
<feature type="binding site" evidence="1">
    <location>
        <position position="145"/>
    </location>
    <ligand>
        <name>Mg(2+)</name>
        <dbReference type="ChEBI" id="CHEBI:18420"/>
        <label>1</label>
    </ligand>
</feature>
<evidence type="ECO:0000255" key="1">
    <source>
        <dbReference type="HAMAP-Rule" id="MF_00034"/>
    </source>
</evidence>